<keyword id="KW-0007">Acetylation</keyword>
<keyword id="KW-0053">Apoptosis</keyword>
<keyword id="KW-0249">Electron transport</keyword>
<keyword id="KW-0349">Heme</keyword>
<keyword id="KW-0408">Iron</keyword>
<keyword id="KW-0479">Metal-binding</keyword>
<keyword id="KW-0496">Mitochondrion</keyword>
<keyword id="KW-0597">Phosphoprotein</keyword>
<keyword id="KW-1185">Reference proteome</keyword>
<keyword id="KW-0679">Respiratory chain</keyword>
<keyword id="KW-0813">Transport</keyword>
<protein>
    <recommendedName>
        <fullName>Cytochrome c</fullName>
    </recommendedName>
</protein>
<comment type="function">
    <text evidence="1">Electron carrier protein. The oxidized form of the cytochrome c heme group can accept an electron from the heme group of the cytochrome c1 subunit of cytochrome reductase. Cytochrome c then transfers this electron to the cytochrome oxidase complex, the final protein carrier in the mitochondrial electron-transport chain (By similarity).</text>
</comment>
<comment type="function">
    <text evidence="1">Plays a role in apoptosis. Suppression of the anti-apoptotic members or activation of the pro-apoptotic members of the Bcl-2 family leads to altered mitochondrial membrane permeability resulting in release of cytochrome c into the cytosol. Binding of cytochrome c to Apaf-1 triggers the activation of caspase-9, which then accelerates apoptosis by activating other caspases (By similarity).</text>
</comment>
<comment type="subcellular location">
    <subcellularLocation>
        <location evidence="1">Mitochondrion intermembrane space</location>
    </subcellularLocation>
    <text evidence="1">Loosely associated with the inner membrane.</text>
</comment>
<comment type="PTM">
    <text evidence="1">Binds 1 heme c group covalently per subunit.</text>
</comment>
<comment type="PTM">
    <text evidence="1">Phosphorylation at Tyr-49 and Tyr-98 both reduce by half the turnover in the reaction with cytochrome c oxidase, down-regulating mitochondrial respiration.</text>
</comment>
<comment type="similarity">
    <text evidence="5">Belongs to the cytochrome c family.</text>
</comment>
<comment type="online information" name="Protein Spotlight">
    <link uri="https://www.proteinspotlight.org/back_issues/076"/>
    <text>Life shuttle - Issue 76 of November 2006</text>
</comment>
<evidence type="ECO:0000250" key="1"/>
<evidence type="ECO:0000250" key="2">
    <source>
        <dbReference type="UniProtKB" id="P62894"/>
    </source>
</evidence>
<evidence type="ECO:0000250" key="3">
    <source>
        <dbReference type="UniProtKB" id="P62897"/>
    </source>
</evidence>
<evidence type="ECO:0000255" key="4">
    <source>
        <dbReference type="PROSITE-ProRule" id="PRU00433"/>
    </source>
</evidence>
<evidence type="ECO:0000305" key="5"/>
<feature type="chain" id="PRO_0000359741" description="Cytochrome c">
    <location>
        <begin position="1"/>
        <end position="105"/>
    </location>
</feature>
<feature type="binding site" description="covalent" evidence="4">
    <location>
        <position position="15"/>
    </location>
    <ligand>
        <name>heme c</name>
        <dbReference type="ChEBI" id="CHEBI:61717"/>
    </ligand>
</feature>
<feature type="binding site" description="covalent" evidence="4">
    <location>
        <position position="18"/>
    </location>
    <ligand>
        <name>heme c</name>
        <dbReference type="ChEBI" id="CHEBI:61717"/>
    </ligand>
</feature>
<feature type="binding site" description="axial binding residue" evidence="4">
    <location>
        <position position="19"/>
    </location>
    <ligand>
        <name>heme c</name>
        <dbReference type="ChEBI" id="CHEBI:61717"/>
    </ligand>
    <ligandPart>
        <name>Fe</name>
        <dbReference type="ChEBI" id="CHEBI:18248"/>
    </ligandPart>
</feature>
<feature type="binding site" description="axial binding residue" evidence="4">
    <location>
        <position position="81"/>
    </location>
    <ligand>
        <name>heme c</name>
        <dbReference type="ChEBI" id="CHEBI:61717"/>
    </ligand>
    <ligandPart>
        <name>Fe</name>
        <dbReference type="ChEBI" id="CHEBI:18248"/>
    </ligandPart>
</feature>
<feature type="modified residue" description="Phosphotyrosine" evidence="2">
    <location>
        <position position="49"/>
    </location>
</feature>
<feature type="modified residue" description="N6-succinyllysine" evidence="3">
    <location>
        <position position="56"/>
    </location>
</feature>
<feature type="modified residue" description="N6-acetyllysine; alternate" evidence="3">
    <location>
        <position position="73"/>
    </location>
</feature>
<feature type="modified residue" description="N6-succinyllysine; alternate" evidence="3">
    <location>
        <position position="73"/>
    </location>
</feature>
<feature type="modified residue" description="Phosphotyrosine" evidence="2">
    <location>
        <position position="98"/>
    </location>
</feature>
<feature type="modified residue" description="N6-acetyllysine" evidence="3">
    <location>
        <position position="100"/>
    </location>
</feature>
<organism>
    <name type="scientific">Otolemur garnettii</name>
    <name type="common">Small-eared galago</name>
    <name type="synonym">Garnett's greater bushbaby</name>
    <dbReference type="NCBI Taxonomy" id="30611"/>
    <lineage>
        <taxon>Eukaryota</taxon>
        <taxon>Metazoa</taxon>
        <taxon>Chordata</taxon>
        <taxon>Craniata</taxon>
        <taxon>Vertebrata</taxon>
        <taxon>Euteleostomi</taxon>
        <taxon>Mammalia</taxon>
        <taxon>Eutheria</taxon>
        <taxon>Euarchontoglires</taxon>
        <taxon>Primates</taxon>
        <taxon>Strepsirrhini</taxon>
        <taxon>Lorisiformes</taxon>
        <taxon>Galagidae</taxon>
        <taxon>Otolemur</taxon>
    </lineage>
</organism>
<name>CYC_OTOGA</name>
<gene>
    <name type="primary">CYCS</name>
</gene>
<accession>B4USV4</accession>
<dbReference type="EMBL" id="DP000874">
    <property type="protein sequence ID" value="ACG63667.1"/>
    <property type="molecule type" value="Genomic_DNA"/>
</dbReference>
<dbReference type="SMR" id="B4USV4"/>
<dbReference type="FunCoup" id="B4USV4">
    <property type="interactions" value="2411"/>
</dbReference>
<dbReference type="STRING" id="30611.ENSOGAP00000017257"/>
<dbReference type="Ensembl" id="ENSOGAT00000025107.1">
    <property type="protein sequence ID" value="ENSOGAP00000017257.1"/>
    <property type="gene ID" value="ENSOGAG00000027625.1"/>
</dbReference>
<dbReference type="GeneID" id="100946237"/>
<dbReference type="KEGG" id="oga:100946237"/>
<dbReference type="eggNOG" id="KOG3453">
    <property type="taxonomic scope" value="Eukaryota"/>
</dbReference>
<dbReference type="GeneTree" id="ENSGT00390000009405"/>
<dbReference type="HOGENOM" id="CLU_060944_3_0_1"/>
<dbReference type="InParanoid" id="B4USV4"/>
<dbReference type="OMA" id="KMRHVGI"/>
<dbReference type="OrthoDB" id="9508248at2759"/>
<dbReference type="TreeFam" id="TF300226"/>
<dbReference type="Proteomes" id="UP000005225">
    <property type="component" value="Unassembled WGS sequence"/>
</dbReference>
<dbReference type="GO" id="GO:0005758">
    <property type="term" value="C:mitochondrial intermembrane space"/>
    <property type="evidence" value="ECO:0007669"/>
    <property type="project" value="UniProtKB-SubCell"/>
</dbReference>
<dbReference type="GO" id="GO:0009055">
    <property type="term" value="F:electron transfer activity"/>
    <property type="evidence" value="ECO:0007669"/>
    <property type="project" value="InterPro"/>
</dbReference>
<dbReference type="GO" id="GO:0020037">
    <property type="term" value="F:heme binding"/>
    <property type="evidence" value="ECO:0007669"/>
    <property type="project" value="InterPro"/>
</dbReference>
<dbReference type="GO" id="GO:0046872">
    <property type="term" value="F:metal ion binding"/>
    <property type="evidence" value="ECO:0007669"/>
    <property type="project" value="UniProtKB-KW"/>
</dbReference>
<dbReference type="GO" id="GO:0006915">
    <property type="term" value="P:apoptotic process"/>
    <property type="evidence" value="ECO:0007669"/>
    <property type="project" value="UniProtKB-KW"/>
</dbReference>
<dbReference type="FunFam" id="1.10.760.10:FF:000008">
    <property type="entry name" value="Cytochrome c"/>
    <property type="match status" value="1"/>
</dbReference>
<dbReference type="Gene3D" id="1.10.760.10">
    <property type="entry name" value="Cytochrome c-like domain"/>
    <property type="match status" value="1"/>
</dbReference>
<dbReference type="InterPro" id="IPR009056">
    <property type="entry name" value="Cyt_c-like_dom"/>
</dbReference>
<dbReference type="InterPro" id="IPR036909">
    <property type="entry name" value="Cyt_c-like_dom_sf"/>
</dbReference>
<dbReference type="InterPro" id="IPR002327">
    <property type="entry name" value="Cyt_c_1A/1B"/>
</dbReference>
<dbReference type="PANTHER" id="PTHR11961">
    <property type="entry name" value="CYTOCHROME C"/>
    <property type="match status" value="1"/>
</dbReference>
<dbReference type="Pfam" id="PF00034">
    <property type="entry name" value="Cytochrom_C"/>
    <property type="match status" value="1"/>
</dbReference>
<dbReference type="PRINTS" id="PR00604">
    <property type="entry name" value="CYTCHRMECIAB"/>
</dbReference>
<dbReference type="SUPFAM" id="SSF46626">
    <property type="entry name" value="Cytochrome c"/>
    <property type="match status" value="1"/>
</dbReference>
<dbReference type="PROSITE" id="PS51007">
    <property type="entry name" value="CYTC"/>
    <property type="match status" value="1"/>
</dbReference>
<sequence length="105" mass="11665">MSDIEKGKKIFVQKCAQCHTVDKGGKHKTGPNLHGLFGRKTGQAAGFSYTDANKNKGITWGEDTLMEYLENPKKYIPGTKMIFAGVKKKGERADLIDYLKKATNE</sequence>
<proteinExistence type="inferred from homology"/>
<reference key="1">
    <citation type="submission" date="2011-03" db="EMBL/GenBank/DDBJ databases">
        <title>Version 3 of the genome sequence of Otolemur garnettii(Bushbaby).</title>
        <authorList>
            <consortium name="The Broad Institute Genome Sequencing Platform"/>
            <person name="Di Palma F."/>
            <person name="Johnson J."/>
            <person name="Lander E.S."/>
            <person name="Lindblad-Toh K."/>
            <person name="Jaffe D.B."/>
            <person name="Gnerre S."/>
            <person name="MacCallum I."/>
            <person name="Przybylski D."/>
            <person name="Ribeiro F.J."/>
            <person name="Burton J.N."/>
            <person name="Walker B.J."/>
            <person name="Sharpe T."/>
            <person name="Hall G."/>
        </authorList>
    </citation>
    <scope>NUCLEOTIDE SEQUENCE [LARGE SCALE GENOMIC DNA]</scope>
</reference>